<dbReference type="EMBL" id="CP002098">
    <property type="protein sequence ID" value="ADM28305.1"/>
    <property type="molecule type" value="Genomic_DNA"/>
</dbReference>
<dbReference type="SMR" id="E0SQX5"/>
<dbReference type="STRING" id="583356.Igag_1503"/>
<dbReference type="KEGG" id="iag:Igag_1503"/>
<dbReference type="HOGENOM" id="CLU_071769_0_0_2"/>
<dbReference type="Proteomes" id="UP000001304">
    <property type="component" value="Chromosome"/>
</dbReference>
<dbReference type="GO" id="GO:0005737">
    <property type="term" value="C:cytoplasm"/>
    <property type="evidence" value="ECO:0007669"/>
    <property type="project" value="UniProtKB-SubCell"/>
</dbReference>
<dbReference type="GO" id="GO:0000178">
    <property type="term" value="C:exosome (RNase complex)"/>
    <property type="evidence" value="ECO:0007669"/>
    <property type="project" value="UniProtKB-KW"/>
</dbReference>
<dbReference type="GO" id="GO:0008143">
    <property type="term" value="F:poly(A) binding"/>
    <property type="evidence" value="ECO:0007669"/>
    <property type="project" value="InterPro"/>
</dbReference>
<dbReference type="GO" id="GO:0071034">
    <property type="term" value="P:CUT catabolic process"/>
    <property type="evidence" value="ECO:0007669"/>
    <property type="project" value="TreeGrafter"/>
</dbReference>
<dbReference type="GO" id="GO:0000467">
    <property type="term" value="P:exonucleolytic trimming to generate mature 3'-end of 5.8S rRNA from tricistronic rRNA transcript (SSU-rRNA, 5.8S rRNA, LSU-rRNA)"/>
    <property type="evidence" value="ECO:0007669"/>
    <property type="project" value="TreeGrafter"/>
</dbReference>
<dbReference type="GO" id="GO:0071051">
    <property type="term" value="P:poly(A)-dependent snoRNA 3'-end processing"/>
    <property type="evidence" value="ECO:0007669"/>
    <property type="project" value="TreeGrafter"/>
</dbReference>
<dbReference type="GO" id="GO:0006401">
    <property type="term" value="P:RNA catabolic process"/>
    <property type="evidence" value="ECO:0007669"/>
    <property type="project" value="UniProtKB-UniRule"/>
</dbReference>
<dbReference type="GO" id="GO:0034475">
    <property type="term" value="P:U4 snRNA 3'-end processing"/>
    <property type="evidence" value="ECO:0007669"/>
    <property type="project" value="TreeGrafter"/>
</dbReference>
<dbReference type="CDD" id="cd22524">
    <property type="entry name" value="KH-I_Rrp4_prokar"/>
    <property type="match status" value="1"/>
</dbReference>
<dbReference type="CDD" id="cd05789">
    <property type="entry name" value="S1_Rrp4"/>
    <property type="match status" value="1"/>
</dbReference>
<dbReference type="Gene3D" id="3.30.1370.10">
    <property type="entry name" value="K Homology domain, type 1"/>
    <property type="match status" value="1"/>
</dbReference>
<dbReference type="Gene3D" id="2.40.50.140">
    <property type="entry name" value="Nucleic acid-binding proteins"/>
    <property type="match status" value="1"/>
</dbReference>
<dbReference type="HAMAP" id="MF_00623">
    <property type="entry name" value="Exosome_Rrp4"/>
    <property type="match status" value="1"/>
</dbReference>
<dbReference type="InterPro" id="IPR026699">
    <property type="entry name" value="Exosome_RNA_bind1/RRP40/RRP4"/>
</dbReference>
<dbReference type="InterPro" id="IPR004088">
    <property type="entry name" value="KH_dom_type_1"/>
</dbReference>
<dbReference type="InterPro" id="IPR036612">
    <property type="entry name" value="KH_dom_type_1_sf"/>
</dbReference>
<dbReference type="InterPro" id="IPR012340">
    <property type="entry name" value="NA-bd_OB-fold"/>
</dbReference>
<dbReference type="InterPro" id="IPR023474">
    <property type="entry name" value="Rrp4"/>
</dbReference>
<dbReference type="InterPro" id="IPR048565">
    <property type="entry name" value="RRP4_S1"/>
</dbReference>
<dbReference type="InterPro" id="IPR003029">
    <property type="entry name" value="S1_domain"/>
</dbReference>
<dbReference type="NCBIfam" id="NF003181">
    <property type="entry name" value="PRK04163.1-1"/>
    <property type="match status" value="1"/>
</dbReference>
<dbReference type="PANTHER" id="PTHR21321:SF4">
    <property type="entry name" value="EXOSOME COMPLEX COMPONENT RRP4"/>
    <property type="match status" value="1"/>
</dbReference>
<dbReference type="PANTHER" id="PTHR21321">
    <property type="entry name" value="PNAS-3 RELATED"/>
    <property type="match status" value="1"/>
</dbReference>
<dbReference type="Pfam" id="PF15985">
    <property type="entry name" value="KH_6"/>
    <property type="match status" value="1"/>
</dbReference>
<dbReference type="Pfam" id="PF21266">
    <property type="entry name" value="RRP4_S1"/>
    <property type="match status" value="1"/>
</dbReference>
<dbReference type="SMART" id="SM00316">
    <property type="entry name" value="S1"/>
    <property type="match status" value="1"/>
</dbReference>
<dbReference type="SUPFAM" id="SSF54791">
    <property type="entry name" value="Eukaryotic type KH-domain (KH-domain type I)"/>
    <property type="match status" value="1"/>
</dbReference>
<dbReference type="SUPFAM" id="SSF50249">
    <property type="entry name" value="Nucleic acid-binding proteins"/>
    <property type="match status" value="1"/>
</dbReference>
<dbReference type="PROSITE" id="PS50126">
    <property type="entry name" value="S1"/>
    <property type="match status" value="1"/>
</dbReference>
<reference key="1">
    <citation type="journal article" date="2010" name="Stand. Genomic Sci.">
        <title>Complete genome sequence of Ignisphaera aggregans type strain (AQ1.S1).</title>
        <authorList>
            <person name="Goker M."/>
            <person name="Held B."/>
            <person name="Lapidus A."/>
            <person name="Nolan M."/>
            <person name="Spring S."/>
            <person name="Yasawong M."/>
            <person name="Lucas S."/>
            <person name="Glavina Del Rio T."/>
            <person name="Tice H."/>
            <person name="Cheng J.F."/>
            <person name="Goodwin L."/>
            <person name="Tapia R."/>
            <person name="Pitluck S."/>
            <person name="Liolios K."/>
            <person name="Ivanova N."/>
            <person name="Mavromatis K."/>
            <person name="Mikhailova N."/>
            <person name="Pati A."/>
            <person name="Chen A."/>
            <person name="Palaniappan K."/>
            <person name="Brambilla E."/>
            <person name="Land M."/>
            <person name="Hauser L."/>
            <person name="Chang Y.J."/>
            <person name="Jeffries C.D."/>
            <person name="Brettin T."/>
            <person name="Detter J.C."/>
            <person name="Han C."/>
            <person name="Rohde M."/>
            <person name="Sikorski J."/>
            <person name="Woyke T."/>
            <person name="Bristow J."/>
            <person name="Eisen J.A."/>
            <person name="Markowitz V."/>
            <person name="Hugenholtz P."/>
            <person name="Kyrpides N.C."/>
            <person name="Klenk H.P."/>
        </authorList>
    </citation>
    <scope>NUCLEOTIDE SEQUENCE [LARGE SCALE GENOMIC DNA]</scope>
    <source>
        <strain>DSM 17230 / JCM 13409 / AQ1.S1</strain>
    </source>
</reference>
<name>RRP4_IGNAA</name>
<accession>E0SQX5</accession>
<keyword id="KW-0963">Cytoplasm</keyword>
<keyword id="KW-0271">Exosome</keyword>
<keyword id="KW-1185">Reference proteome</keyword>
<keyword id="KW-0694">RNA-binding</keyword>
<proteinExistence type="inferred from homology"/>
<comment type="function">
    <text evidence="1">Non-catalytic component of the exosome, which is a complex involved in RNA degradation. Increases the RNA binding and the efficiency of RNA degradation. Confers strong poly(A) specificity to the exosome.</text>
</comment>
<comment type="subunit">
    <text evidence="1">Component of the archaeal exosome complex. Forms a trimer of Rrp4 and/or Csl4 subunits. The trimer associates with a hexameric ring-like arrangement composed of 3 Rrp41-Rrp42 heterodimers.</text>
</comment>
<comment type="subcellular location">
    <subcellularLocation>
        <location evidence="1">Cytoplasm</location>
    </subcellularLocation>
</comment>
<comment type="similarity">
    <text evidence="1">Belongs to the RRP4 family.</text>
</comment>
<organism>
    <name type="scientific">Ignisphaera aggregans (strain DSM 17230 / JCM 13409 / AQ1.S1)</name>
    <dbReference type="NCBI Taxonomy" id="583356"/>
    <lineage>
        <taxon>Archaea</taxon>
        <taxon>Thermoproteota</taxon>
        <taxon>Thermoprotei</taxon>
        <taxon>Desulfurococcales</taxon>
        <taxon>Desulfurococcaceae</taxon>
        <taxon>Ignisphaera</taxon>
    </lineage>
</organism>
<evidence type="ECO:0000255" key="1">
    <source>
        <dbReference type="HAMAP-Rule" id="MF_00623"/>
    </source>
</evidence>
<gene>
    <name evidence="1" type="primary">rrp4</name>
    <name type="ordered locus">Igag_1503</name>
</gene>
<sequence>MYEKEAISLQTSKRILVVPGDSVQISQDVVIDPQQILYLYKKDDNTFISTITALLDFENIDDKKKLRVIPLKGRYIPREGDIVIGIVVDVTLSSWIIDINSPYLSVLNASDYLGRSFNPLTDNIRKYLEIGDVVVGKIATFDRSRGPILTVQDKGLGKVVDGSLIEIEPIKVARVIGKKKSMLNMLIEQTKCDILVGNNGRIILRCPNPELEYIAILAIKKIESEAHTTGLTERIREFIIEEKVKRGLIKYEV</sequence>
<protein>
    <recommendedName>
        <fullName evidence="1">Exosome complex component Rrp4</fullName>
    </recommendedName>
</protein>
<feature type="chain" id="PRO_0000416229" description="Exosome complex component Rrp4">
    <location>
        <begin position="1"/>
        <end position="253"/>
    </location>
</feature>
<feature type="domain" description="S1 motif" evidence="1">
    <location>
        <begin position="80"/>
        <end position="153"/>
    </location>
</feature>